<protein>
    <recommendedName>
        <fullName evidence="1">Bifunctional purine biosynthesis protein PurH</fullName>
    </recommendedName>
    <domain>
        <recommendedName>
            <fullName evidence="1">Phosphoribosylaminoimidazolecarboxamide formyltransferase</fullName>
            <ecNumber evidence="1">2.1.2.3</ecNumber>
        </recommendedName>
        <alternativeName>
            <fullName evidence="1">AICAR transformylase</fullName>
        </alternativeName>
    </domain>
    <domain>
        <recommendedName>
            <fullName evidence="1">IMP cyclohydrolase</fullName>
            <ecNumber evidence="1">3.5.4.10</ecNumber>
        </recommendedName>
        <alternativeName>
            <fullName evidence="1">ATIC</fullName>
        </alternativeName>
        <alternativeName>
            <fullName evidence="1">IMP synthase</fullName>
        </alternativeName>
        <alternativeName>
            <fullName evidence="1">Inosinicase</fullName>
        </alternativeName>
    </domain>
</protein>
<feature type="chain" id="PRO_1000071452" description="Bifunctional purine biosynthesis protein PurH">
    <location>
        <begin position="1"/>
        <end position="492"/>
    </location>
</feature>
<feature type="domain" description="MGS-like" evidence="2">
    <location>
        <begin position="1"/>
        <end position="144"/>
    </location>
</feature>
<reference key="1">
    <citation type="journal article" date="2008" name="J. Bacteriol.">
        <title>Genome sequence of Staphylococcus aureus strain Newman and comparative analysis of staphylococcal genomes: polymorphism and evolution of two major pathogenicity islands.</title>
        <authorList>
            <person name="Baba T."/>
            <person name="Bae T."/>
            <person name="Schneewind O."/>
            <person name="Takeuchi F."/>
            <person name="Hiramatsu K."/>
        </authorList>
    </citation>
    <scope>NUCLEOTIDE SEQUENCE [LARGE SCALE GENOMIC DNA]</scope>
    <source>
        <strain>Newman</strain>
    </source>
</reference>
<proteinExistence type="inferred from homology"/>
<gene>
    <name evidence="1" type="primary">purH</name>
    <name type="ordered locus">NWMN_0941</name>
</gene>
<accession>A6QFT1</accession>
<organism>
    <name type="scientific">Staphylococcus aureus (strain Newman)</name>
    <dbReference type="NCBI Taxonomy" id="426430"/>
    <lineage>
        <taxon>Bacteria</taxon>
        <taxon>Bacillati</taxon>
        <taxon>Bacillota</taxon>
        <taxon>Bacilli</taxon>
        <taxon>Bacillales</taxon>
        <taxon>Staphylococcaceae</taxon>
        <taxon>Staphylococcus</taxon>
    </lineage>
</organism>
<sequence length="492" mass="54305">MKKAILSVSNKTGIVEFAKALTQLNYELYSTGGTKRILDEANVPVRSVSDLTHFPEIMDGRVKTLHPAVHGGILADRNKPQHLNELSEQHIDLIDMVVVNLYPFQQTVANPDVTMDEAIENIDIGGPTMLRAAAKNYKHVTTIVHPADYQEVLTLLRNDSLDESYRQSLMIKVFEHTAEYDEAIVRFFKGDKETLRYGENPQQSAYFVRTSNAKHTIAGAKQLHGKQLSYNNIKDADATLALVKKFDTPATVAVKHMNPCGVGIGDTIEQAFQHAYEADSQSIFGGIVALNRAVTPELAEQLHSIFLEVIIAPKFTDEALDILKQKKNVRLLEIDMTIDSNEEEFVSVSGGYLVQDKDNYVVPKEEMKVVTEVAPTDEQWEAMLLGWKVVPSVKSNAIILSNNKQTVGIGAGQMNRVGAAKIALERAIEINDHVALVSDGFFPMGDTVELAAQHGIKAIIQPGGSIKDQDSIDMANKHGIAMVVTGTRHFKH</sequence>
<evidence type="ECO:0000255" key="1">
    <source>
        <dbReference type="HAMAP-Rule" id="MF_00139"/>
    </source>
</evidence>
<evidence type="ECO:0000255" key="2">
    <source>
        <dbReference type="PROSITE-ProRule" id="PRU01202"/>
    </source>
</evidence>
<name>PUR9_STAAE</name>
<comment type="catalytic activity">
    <reaction evidence="1">
        <text>(6R)-10-formyltetrahydrofolate + 5-amino-1-(5-phospho-beta-D-ribosyl)imidazole-4-carboxamide = 5-formamido-1-(5-phospho-D-ribosyl)imidazole-4-carboxamide + (6S)-5,6,7,8-tetrahydrofolate</text>
        <dbReference type="Rhea" id="RHEA:22192"/>
        <dbReference type="ChEBI" id="CHEBI:57453"/>
        <dbReference type="ChEBI" id="CHEBI:58467"/>
        <dbReference type="ChEBI" id="CHEBI:58475"/>
        <dbReference type="ChEBI" id="CHEBI:195366"/>
        <dbReference type="EC" id="2.1.2.3"/>
    </reaction>
</comment>
<comment type="catalytic activity">
    <reaction evidence="1">
        <text>IMP + H2O = 5-formamido-1-(5-phospho-D-ribosyl)imidazole-4-carboxamide</text>
        <dbReference type="Rhea" id="RHEA:18445"/>
        <dbReference type="ChEBI" id="CHEBI:15377"/>
        <dbReference type="ChEBI" id="CHEBI:58053"/>
        <dbReference type="ChEBI" id="CHEBI:58467"/>
        <dbReference type="EC" id="3.5.4.10"/>
    </reaction>
</comment>
<comment type="pathway">
    <text evidence="1">Purine metabolism; IMP biosynthesis via de novo pathway; 5-formamido-1-(5-phospho-D-ribosyl)imidazole-4-carboxamide from 5-amino-1-(5-phospho-D-ribosyl)imidazole-4-carboxamide (10-formyl THF route): step 1/1.</text>
</comment>
<comment type="pathway">
    <text evidence="1">Purine metabolism; IMP biosynthesis via de novo pathway; IMP from 5-formamido-1-(5-phospho-D-ribosyl)imidazole-4-carboxamide: step 1/1.</text>
</comment>
<comment type="domain">
    <text evidence="1">The IMP cyclohydrolase activity resides in the N-terminal region.</text>
</comment>
<comment type="similarity">
    <text evidence="1">Belongs to the PurH family.</text>
</comment>
<keyword id="KW-0378">Hydrolase</keyword>
<keyword id="KW-0511">Multifunctional enzyme</keyword>
<keyword id="KW-0658">Purine biosynthesis</keyword>
<keyword id="KW-0808">Transferase</keyword>
<dbReference type="EC" id="2.1.2.3" evidence="1"/>
<dbReference type="EC" id="3.5.4.10" evidence="1"/>
<dbReference type="EMBL" id="AP009351">
    <property type="protein sequence ID" value="BAF67213.1"/>
    <property type="molecule type" value="Genomic_DNA"/>
</dbReference>
<dbReference type="RefSeq" id="WP_000709280.1">
    <property type="nucleotide sequence ID" value="NZ_JBBIAE010000002.1"/>
</dbReference>
<dbReference type="SMR" id="A6QFT1"/>
<dbReference type="KEGG" id="sae:NWMN_0941"/>
<dbReference type="HOGENOM" id="CLU_016316_5_2_9"/>
<dbReference type="UniPathway" id="UPA00074">
    <property type="reaction ID" value="UER00133"/>
</dbReference>
<dbReference type="UniPathway" id="UPA00074">
    <property type="reaction ID" value="UER00135"/>
</dbReference>
<dbReference type="Proteomes" id="UP000006386">
    <property type="component" value="Chromosome"/>
</dbReference>
<dbReference type="GO" id="GO:0005829">
    <property type="term" value="C:cytosol"/>
    <property type="evidence" value="ECO:0007669"/>
    <property type="project" value="TreeGrafter"/>
</dbReference>
<dbReference type="GO" id="GO:0003937">
    <property type="term" value="F:IMP cyclohydrolase activity"/>
    <property type="evidence" value="ECO:0007669"/>
    <property type="project" value="UniProtKB-UniRule"/>
</dbReference>
<dbReference type="GO" id="GO:0004643">
    <property type="term" value="F:phosphoribosylaminoimidazolecarboxamide formyltransferase activity"/>
    <property type="evidence" value="ECO:0007669"/>
    <property type="project" value="UniProtKB-UniRule"/>
</dbReference>
<dbReference type="GO" id="GO:0006189">
    <property type="term" value="P:'de novo' IMP biosynthetic process"/>
    <property type="evidence" value="ECO:0007669"/>
    <property type="project" value="UniProtKB-UniRule"/>
</dbReference>
<dbReference type="CDD" id="cd01421">
    <property type="entry name" value="IMPCH"/>
    <property type="match status" value="1"/>
</dbReference>
<dbReference type="FunFam" id="3.40.140.20:FF:000001">
    <property type="entry name" value="Bifunctional purine biosynthesis protein PurH"/>
    <property type="match status" value="1"/>
</dbReference>
<dbReference type="FunFam" id="3.40.140.20:FF:000002">
    <property type="entry name" value="Bifunctional purine biosynthesis protein PurH"/>
    <property type="match status" value="1"/>
</dbReference>
<dbReference type="FunFam" id="3.40.50.1380:FF:000001">
    <property type="entry name" value="Bifunctional purine biosynthesis protein PurH"/>
    <property type="match status" value="1"/>
</dbReference>
<dbReference type="Gene3D" id="3.40.140.20">
    <property type="match status" value="2"/>
</dbReference>
<dbReference type="Gene3D" id="3.40.50.1380">
    <property type="entry name" value="Methylglyoxal synthase-like domain"/>
    <property type="match status" value="1"/>
</dbReference>
<dbReference type="HAMAP" id="MF_00139">
    <property type="entry name" value="PurH"/>
    <property type="match status" value="1"/>
</dbReference>
<dbReference type="InterPro" id="IPR024051">
    <property type="entry name" value="AICAR_Tfase_dup_dom_sf"/>
</dbReference>
<dbReference type="InterPro" id="IPR016193">
    <property type="entry name" value="Cytidine_deaminase-like"/>
</dbReference>
<dbReference type="InterPro" id="IPR011607">
    <property type="entry name" value="MGS-like_dom"/>
</dbReference>
<dbReference type="InterPro" id="IPR036914">
    <property type="entry name" value="MGS-like_dom_sf"/>
</dbReference>
<dbReference type="InterPro" id="IPR002695">
    <property type="entry name" value="PurH-like"/>
</dbReference>
<dbReference type="NCBIfam" id="NF002049">
    <property type="entry name" value="PRK00881.1"/>
    <property type="match status" value="1"/>
</dbReference>
<dbReference type="NCBIfam" id="TIGR00355">
    <property type="entry name" value="purH"/>
    <property type="match status" value="1"/>
</dbReference>
<dbReference type="PANTHER" id="PTHR11692:SF0">
    <property type="entry name" value="BIFUNCTIONAL PURINE BIOSYNTHESIS PROTEIN ATIC"/>
    <property type="match status" value="1"/>
</dbReference>
<dbReference type="PANTHER" id="PTHR11692">
    <property type="entry name" value="BIFUNCTIONAL PURINE BIOSYNTHESIS PROTEIN PURH"/>
    <property type="match status" value="1"/>
</dbReference>
<dbReference type="Pfam" id="PF01808">
    <property type="entry name" value="AICARFT_IMPCHas"/>
    <property type="match status" value="1"/>
</dbReference>
<dbReference type="Pfam" id="PF02142">
    <property type="entry name" value="MGS"/>
    <property type="match status" value="1"/>
</dbReference>
<dbReference type="PIRSF" id="PIRSF000414">
    <property type="entry name" value="AICARFT_IMPCHas"/>
    <property type="match status" value="1"/>
</dbReference>
<dbReference type="SMART" id="SM00798">
    <property type="entry name" value="AICARFT_IMPCHas"/>
    <property type="match status" value="1"/>
</dbReference>
<dbReference type="SMART" id="SM00851">
    <property type="entry name" value="MGS"/>
    <property type="match status" value="1"/>
</dbReference>
<dbReference type="SUPFAM" id="SSF53927">
    <property type="entry name" value="Cytidine deaminase-like"/>
    <property type="match status" value="1"/>
</dbReference>
<dbReference type="SUPFAM" id="SSF52335">
    <property type="entry name" value="Methylglyoxal synthase-like"/>
    <property type="match status" value="1"/>
</dbReference>
<dbReference type="PROSITE" id="PS51855">
    <property type="entry name" value="MGS"/>
    <property type="match status" value="1"/>
</dbReference>